<keyword id="KW-0413">Isomerase</keyword>
<keyword id="KW-1185">Reference proteome</keyword>
<keyword id="KW-0697">Rotamase</keyword>
<gene>
    <name type="primary">dod</name>
    <name type="ORF">CG17051</name>
</gene>
<organism>
    <name type="scientific">Drosophila melanogaster</name>
    <name type="common">Fruit fly</name>
    <dbReference type="NCBI Taxonomy" id="7227"/>
    <lineage>
        <taxon>Eukaryota</taxon>
        <taxon>Metazoa</taxon>
        <taxon>Ecdysozoa</taxon>
        <taxon>Arthropoda</taxon>
        <taxon>Hexapoda</taxon>
        <taxon>Insecta</taxon>
        <taxon>Pterygota</taxon>
        <taxon>Neoptera</taxon>
        <taxon>Endopterygota</taxon>
        <taxon>Diptera</taxon>
        <taxon>Brachycera</taxon>
        <taxon>Muscomorpha</taxon>
        <taxon>Ephydroidea</taxon>
        <taxon>Drosophilidae</taxon>
        <taxon>Drosophila</taxon>
        <taxon>Sophophora</taxon>
    </lineage>
</organism>
<protein>
    <recommendedName>
        <fullName>Putative peptidyl-prolyl cis-trans isomerase dodo</fullName>
        <shortName>PPIase dodo</shortName>
        <ecNumber>5.2.1.8</ecNumber>
    </recommendedName>
    <alternativeName>
        <fullName>Rotamase dodo</fullName>
    </alternativeName>
</protein>
<comment type="catalytic activity">
    <reaction>
        <text>[protein]-peptidylproline (omega=180) = [protein]-peptidylproline (omega=0)</text>
        <dbReference type="Rhea" id="RHEA:16237"/>
        <dbReference type="Rhea" id="RHEA-COMP:10747"/>
        <dbReference type="Rhea" id="RHEA-COMP:10748"/>
        <dbReference type="ChEBI" id="CHEBI:83833"/>
        <dbReference type="ChEBI" id="CHEBI:83834"/>
        <dbReference type="EC" id="5.2.1.8"/>
    </reaction>
</comment>
<dbReference type="EC" id="5.2.1.8"/>
<dbReference type="EMBL" id="U35140">
    <property type="protein sequence ID" value="AAC46958.1"/>
    <property type="molecule type" value="mRNA"/>
</dbReference>
<dbReference type="EMBL" id="AF017777">
    <property type="protein sequence ID" value="AAC28408.1"/>
    <property type="molecule type" value="Genomic_DNA"/>
</dbReference>
<dbReference type="EMBL" id="AE014298">
    <property type="protein sequence ID" value="AAF50829.1"/>
    <property type="molecule type" value="Genomic_DNA"/>
</dbReference>
<dbReference type="EMBL" id="BT099557">
    <property type="protein sequence ID" value="ACU32641.1"/>
    <property type="molecule type" value="mRNA"/>
</dbReference>
<dbReference type="PIR" id="T08426">
    <property type="entry name" value="T08426"/>
</dbReference>
<dbReference type="RefSeq" id="NP_523428.1">
    <property type="nucleotide sequence ID" value="NM_078704.4"/>
</dbReference>
<dbReference type="SMR" id="P54353"/>
<dbReference type="BioGRID" id="59389">
    <property type="interactions" value="48"/>
</dbReference>
<dbReference type="DIP" id="DIP-18540N"/>
<dbReference type="FunCoup" id="P54353">
    <property type="interactions" value="2043"/>
</dbReference>
<dbReference type="IntAct" id="P54353">
    <property type="interactions" value="149"/>
</dbReference>
<dbReference type="STRING" id="7227.FBpp0076894"/>
<dbReference type="PaxDb" id="7227-FBpp0076894"/>
<dbReference type="DNASU" id="33111"/>
<dbReference type="EnsemblMetazoa" id="FBtr0077193">
    <property type="protein sequence ID" value="FBpp0076894"/>
    <property type="gene ID" value="FBgn0015379"/>
</dbReference>
<dbReference type="GeneID" id="33111"/>
<dbReference type="KEGG" id="dme:Dmel_CG17051"/>
<dbReference type="UCSC" id="CG17051-RA">
    <property type="organism name" value="d. melanogaster"/>
</dbReference>
<dbReference type="AGR" id="FB:FBgn0015379"/>
<dbReference type="CTD" id="33111"/>
<dbReference type="FlyBase" id="FBgn0015379">
    <property type="gene designation" value="dod"/>
</dbReference>
<dbReference type="VEuPathDB" id="VectorBase:FBgn0015379"/>
<dbReference type="eggNOG" id="KOG3259">
    <property type="taxonomic scope" value="Eukaryota"/>
</dbReference>
<dbReference type="GeneTree" id="ENSGT00640000091578"/>
<dbReference type="HOGENOM" id="CLU_090028_0_1_1"/>
<dbReference type="InParanoid" id="P54353"/>
<dbReference type="OMA" id="DEVQCLH"/>
<dbReference type="OrthoDB" id="2530521at2759"/>
<dbReference type="PhylomeDB" id="P54353"/>
<dbReference type="BRENDA" id="5.2.1.8">
    <property type="organism ID" value="1994"/>
</dbReference>
<dbReference type="Reactome" id="R-DME-6804756">
    <property type="pathway name" value="Regulation of TP53 Activity through Phosphorylation"/>
</dbReference>
<dbReference type="Reactome" id="R-DME-6811555">
    <property type="pathway name" value="PI5P Regulates TP53 Acetylation"/>
</dbReference>
<dbReference type="BioGRID-ORCS" id="33111">
    <property type="hits" value="0 hits in 1 CRISPR screen"/>
</dbReference>
<dbReference type="GenomeRNAi" id="33111"/>
<dbReference type="PRO" id="PR:P54353"/>
<dbReference type="Proteomes" id="UP000000803">
    <property type="component" value="Chromosome X"/>
</dbReference>
<dbReference type="Bgee" id="FBgn0015379">
    <property type="expression patterns" value="Expressed in adult middle midgut class II enteroendocrine cell in adult midgut (Drosophila) and 134 other cell types or tissues"/>
</dbReference>
<dbReference type="GO" id="GO:0005829">
    <property type="term" value="C:cytosol"/>
    <property type="evidence" value="ECO:0000318"/>
    <property type="project" value="GO_Central"/>
</dbReference>
<dbReference type="GO" id="GO:0005634">
    <property type="term" value="C:nucleus"/>
    <property type="evidence" value="ECO:0000314"/>
    <property type="project" value="FlyBase"/>
</dbReference>
<dbReference type="GO" id="GO:0140297">
    <property type="term" value="F:DNA-binding transcription factor binding"/>
    <property type="evidence" value="ECO:0000353"/>
    <property type="project" value="FlyBase"/>
</dbReference>
<dbReference type="GO" id="GO:0003755">
    <property type="term" value="F:peptidyl-prolyl cis-trans isomerase activity"/>
    <property type="evidence" value="ECO:0000250"/>
    <property type="project" value="FlyBase"/>
</dbReference>
<dbReference type="GO" id="GO:0031398">
    <property type="term" value="P:positive regulation of protein ubiquitination"/>
    <property type="evidence" value="ECO:0000314"/>
    <property type="project" value="FlyBase"/>
</dbReference>
<dbReference type="GO" id="GO:1904059">
    <property type="term" value="P:regulation of locomotor rhythm"/>
    <property type="evidence" value="ECO:0000315"/>
    <property type="project" value="FlyBase"/>
</dbReference>
<dbReference type="CDD" id="cd00201">
    <property type="entry name" value="WW"/>
    <property type="match status" value="1"/>
</dbReference>
<dbReference type="FunFam" id="2.20.70.10:FF:000085">
    <property type="entry name" value="Peptidyl-prolyl cis-trans isomerase"/>
    <property type="match status" value="1"/>
</dbReference>
<dbReference type="FunFam" id="3.10.50.40:FF:000026">
    <property type="entry name" value="Peptidyl-prolyl cis-trans isomerase"/>
    <property type="match status" value="1"/>
</dbReference>
<dbReference type="Gene3D" id="2.20.70.10">
    <property type="match status" value="1"/>
</dbReference>
<dbReference type="Gene3D" id="3.10.50.40">
    <property type="match status" value="1"/>
</dbReference>
<dbReference type="InterPro" id="IPR046357">
    <property type="entry name" value="PPIase_dom_sf"/>
</dbReference>
<dbReference type="InterPro" id="IPR051370">
    <property type="entry name" value="PPIase_Pin1"/>
</dbReference>
<dbReference type="InterPro" id="IPR000297">
    <property type="entry name" value="PPIase_PpiC"/>
</dbReference>
<dbReference type="InterPro" id="IPR023058">
    <property type="entry name" value="PPIase_PpiC_CS"/>
</dbReference>
<dbReference type="InterPro" id="IPR001202">
    <property type="entry name" value="WW_dom"/>
</dbReference>
<dbReference type="InterPro" id="IPR036020">
    <property type="entry name" value="WW_dom_sf"/>
</dbReference>
<dbReference type="PANTHER" id="PTHR10657">
    <property type="entry name" value="PEPTIDYL-PROLYL CIS-TRANS ISOMERASE"/>
    <property type="match status" value="1"/>
</dbReference>
<dbReference type="PANTHER" id="PTHR10657:SF4">
    <property type="entry name" value="PEPTIDYL-PROLYL CIS-TRANS ISOMERASE-RELATED"/>
    <property type="match status" value="1"/>
</dbReference>
<dbReference type="Pfam" id="PF00639">
    <property type="entry name" value="Rotamase"/>
    <property type="match status" value="1"/>
</dbReference>
<dbReference type="Pfam" id="PF00397">
    <property type="entry name" value="WW"/>
    <property type="match status" value="1"/>
</dbReference>
<dbReference type="SMART" id="SM00456">
    <property type="entry name" value="WW"/>
    <property type="match status" value="1"/>
</dbReference>
<dbReference type="SUPFAM" id="SSF54534">
    <property type="entry name" value="FKBP-like"/>
    <property type="match status" value="1"/>
</dbReference>
<dbReference type="SUPFAM" id="SSF51045">
    <property type="entry name" value="WW domain"/>
    <property type="match status" value="1"/>
</dbReference>
<dbReference type="PROSITE" id="PS01096">
    <property type="entry name" value="PPIC_PPIASE_1"/>
    <property type="match status" value="1"/>
</dbReference>
<dbReference type="PROSITE" id="PS50198">
    <property type="entry name" value="PPIC_PPIASE_2"/>
    <property type="match status" value="1"/>
</dbReference>
<dbReference type="PROSITE" id="PS01159">
    <property type="entry name" value="WW_DOMAIN_1"/>
    <property type="match status" value="1"/>
</dbReference>
<dbReference type="PROSITE" id="PS50020">
    <property type="entry name" value="WW_DOMAIN_2"/>
    <property type="match status" value="1"/>
</dbReference>
<reference key="1">
    <citation type="journal article" date="1996" name="Proc. Natl. Acad. Sci. U.S.A.">
        <title>The Drosophila melanogaster dodo (dod) gene, conserved in humans, is functionally interchangeable with the ESS1 cell division gene of Saccharomyces cerevisiae.</title>
        <authorList>
            <person name="Maleszka R."/>
            <person name="Hanes S.D."/>
            <person name="Hackett R.L."/>
            <person name="de Couet H.G."/>
            <person name="Miklos G.L.G."/>
        </authorList>
    </citation>
    <scope>NUCLEOTIDE SEQUENCE [MRNA]</scope>
    <source>
        <strain>Oregon-R</strain>
        <tissue>Larva</tissue>
        <tissue>Pupae</tissue>
    </source>
</reference>
<reference key="2">
    <citation type="journal article" date="1998" name="Proc. Natl. Acad. Sci. U.S.A.">
        <title>Data transferability from model organisms to human beings: insights from the functional genomics of the flightless region of Drosophila.</title>
        <authorList>
            <person name="Maleszka R."/>
            <person name="de Couet H.G."/>
            <person name="Miklos G.L.G."/>
        </authorList>
    </citation>
    <scope>NUCLEOTIDE SEQUENCE [GENOMIC DNA]</scope>
    <source>
        <strain>Canton-S</strain>
    </source>
</reference>
<reference key="3">
    <citation type="journal article" date="2000" name="Science">
        <title>The genome sequence of Drosophila melanogaster.</title>
        <authorList>
            <person name="Adams M.D."/>
            <person name="Celniker S.E."/>
            <person name="Holt R.A."/>
            <person name="Evans C.A."/>
            <person name="Gocayne J.D."/>
            <person name="Amanatides P.G."/>
            <person name="Scherer S.E."/>
            <person name="Li P.W."/>
            <person name="Hoskins R.A."/>
            <person name="Galle R.F."/>
            <person name="George R.A."/>
            <person name="Lewis S.E."/>
            <person name="Richards S."/>
            <person name="Ashburner M."/>
            <person name="Henderson S.N."/>
            <person name="Sutton G.G."/>
            <person name="Wortman J.R."/>
            <person name="Yandell M.D."/>
            <person name="Zhang Q."/>
            <person name="Chen L.X."/>
            <person name="Brandon R.C."/>
            <person name="Rogers Y.-H.C."/>
            <person name="Blazej R.G."/>
            <person name="Champe M."/>
            <person name="Pfeiffer B.D."/>
            <person name="Wan K.H."/>
            <person name="Doyle C."/>
            <person name="Baxter E.G."/>
            <person name="Helt G."/>
            <person name="Nelson C.R."/>
            <person name="Miklos G.L.G."/>
            <person name="Abril J.F."/>
            <person name="Agbayani A."/>
            <person name="An H.-J."/>
            <person name="Andrews-Pfannkoch C."/>
            <person name="Baldwin D."/>
            <person name="Ballew R.M."/>
            <person name="Basu A."/>
            <person name="Baxendale J."/>
            <person name="Bayraktaroglu L."/>
            <person name="Beasley E.M."/>
            <person name="Beeson K.Y."/>
            <person name="Benos P.V."/>
            <person name="Berman B.P."/>
            <person name="Bhandari D."/>
            <person name="Bolshakov S."/>
            <person name="Borkova D."/>
            <person name="Botchan M.R."/>
            <person name="Bouck J."/>
            <person name="Brokstein P."/>
            <person name="Brottier P."/>
            <person name="Burtis K.C."/>
            <person name="Busam D.A."/>
            <person name="Butler H."/>
            <person name="Cadieu E."/>
            <person name="Center A."/>
            <person name="Chandra I."/>
            <person name="Cherry J.M."/>
            <person name="Cawley S."/>
            <person name="Dahlke C."/>
            <person name="Davenport L.B."/>
            <person name="Davies P."/>
            <person name="de Pablos B."/>
            <person name="Delcher A."/>
            <person name="Deng Z."/>
            <person name="Mays A.D."/>
            <person name="Dew I."/>
            <person name="Dietz S.M."/>
            <person name="Dodson K."/>
            <person name="Doup L.E."/>
            <person name="Downes M."/>
            <person name="Dugan-Rocha S."/>
            <person name="Dunkov B.C."/>
            <person name="Dunn P."/>
            <person name="Durbin K.J."/>
            <person name="Evangelista C.C."/>
            <person name="Ferraz C."/>
            <person name="Ferriera S."/>
            <person name="Fleischmann W."/>
            <person name="Fosler C."/>
            <person name="Gabrielian A.E."/>
            <person name="Garg N.S."/>
            <person name="Gelbart W.M."/>
            <person name="Glasser K."/>
            <person name="Glodek A."/>
            <person name="Gong F."/>
            <person name="Gorrell J.H."/>
            <person name="Gu Z."/>
            <person name="Guan P."/>
            <person name="Harris M."/>
            <person name="Harris N.L."/>
            <person name="Harvey D.A."/>
            <person name="Heiman T.J."/>
            <person name="Hernandez J.R."/>
            <person name="Houck J."/>
            <person name="Hostin D."/>
            <person name="Houston K.A."/>
            <person name="Howland T.J."/>
            <person name="Wei M.-H."/>
            <person name="Ibegwam C."/>
            <person name="Jalali M."/>
            <person name="Kalush F."/>
            <person name="Karpen G.H."/>
            <person name="Ke Z."/>
            <person name="Kennison J.A."/>
            <person name="Ketchum K.A."/>
            <person name="Kimmel B.E."/>
            <person name="Kodira C.D."/>
            <person name="Kraft C.L."/>
            <person name="Kravitz S."/>
            <person name="Kulp D."/>
            <person name="Lai Z."/>
            <person name="Lasko P."/>
            <person name="Lei Y."/>
            <person name="Levitsky A.A."/>
            <person name="Li J.H."/>
            <person name="Li Z."/>
            <person name="Liang Y."/>
            <person name="Lin X."/>
            <person name="Liu X."/>
            <person name="Mattei B."/>
            <person name="McIntosh T.C."/>
            <person name="McLeod M.P."/>
            <person name="McPherson D."/>
            <person name="Merkulov G."/>
            <person name="Milshina N.V."/>
            <person name="Mobarry C."/>
            <person name="Morris J."/>
            <person name="Moshrefi A."/>
            <person name="Mount S.M."/>
            <person name="Moy M."/>
            <person name="Murphy B."/>
            <person name="Murphy L."/>
            <person name="Muzny D.M."/>
            <person name="Nelson D.L."/>
            <person name="Nelson D.R."/>
            <person name="Nelson K.A."/>
            <person name="Nixon K."/>
            <person name="Nusskern D.R."/>
            <person name="Pacleb J.M."/>
            <person name="Palazzolo M."/>
            <person name="Pittman G.S."/>
            <person name="Pan S."/>
            <person name="Pollard J."/>
            <person name="Puri V."/>
            <person name="Reese M.G."/>
            <person name="Reinert K."/>
            <person name="Remington K."/>
            <person name="Saunders R.D.C."/>
            <person name="Scheeler F."/>
            <person name="Shen H."/>
            <person name="Shue B.C."/>
            <person name="Siden-Kiamos I."/>
            <person name="Simpson M."/>
            <person name="Skupski M.P."/>
            <person name="Smith T.J."/>
            <person name="Spier E."/>
            <person name="Spradling A.C."/>
            <person name="Stapleton M."/>
            <person name="Strong R."/>
            <person name="Sun E."/>
            <person name="Svirskas R."/>
            <person name="Tector C."/>
            <person name="Turner R."/>
            <person name="Venter E."/>
            <person name="Wang A.H."/>
            <person name="Wang X."/>
            <person name="Wang Z.-Y."/>
            <person name="Wassarman D.A."/>
            <person name="Weinstock G.M."/>
            <person name="Weissenbach J."/>
            <person name="Williams S.M."/>
            <person name="Woodage T."/>
            <person name="Worley K.C."/>
            <person name="Wu D."/>
            <person name="Yang S."/>
            <person name="Yao Q.A."/>
            <person name="Ye J."/>
            <person name="Yeh R.-F."/>
            <person name="Zaveri J.S."/>
            <person name="Zhan M."/>
            <person name="Zhang G."/>
            <person name="Zhao Q."/>
            <person name="Zheng L."/>
            <person name="Zheng X.H."/>
            <person name="Zhong F.N."/>
            <person name="Zhong W."/>
            <person name="Zhou X."/>
            <person name="Zhu S.C."/>
            <person name="Zhu X."/>
            <person name="Smith H.O."/>
            <person name="Gibbs R.A."/>
            <person name="Myers E.W."/>
            <person name="Rubin G.M."/>
            <person name="Venter J.C."/>
        </authorList>
    </citation>
    <scope>NUCLEOTIDE SEQUENCE [LARGE SCALE GENOMIC DNA]</scope>
    <source>
        <strain>Berkeley</strain>
    </source>
</reference>
<reference key="4">
    <citation type="journal article" date="2002" name="Genome Biol.">
        <title>Annotation of the Drosophila melanogaster euchromatic genome: a systematic review.</title>
        <authorList>
            <person name="Misra S."/>
            <person name="Crosby M.A."/>
            <person name="Mungall C.J."/>
            <person name="Matthews B.B."/>
            <person name="Campbell K.S."/>
            <person name="Hradecky P."/>
            <person name="Huang Y."/>
            <person name="Kaminker J.S."/>
            <person name="Millburn G.H."/>
            <person name="Prochnik S.E."/>
            <person name="Smith C.D."/>
            <person name="Tupy J.L."/>
            <person name="Whitfield E.J."/>
            <person name="Bayraktaroglu L."/>
            <person name="Berman B.P."/>
            <person name="Bettencourt B.R."/>
            <person name="Celniker S.E."/>
            <person name="de Grey A.D.N.J."/>
            <person name="Drysdale R.A."/>
            <person name="Harris N.L."/>
            <person name="Richter J."/>
            <person name="Russo S."/>
            <person name="Schroeder A.J."/>
            <person name="Shu S.Q."/>
            <person name="Stapleton M."/>
            <person name="Yamada C."/>
            <person name="Ashburner M."/>
            <person name="Gelbart W.M."/>
            <person name="Rubin G.M."/>
            <person name="Lewis S.E."/>
        </authorList>
    </citation>
    <scope>GENOME REANNOTATION</scope>
    <source>
        <strain>Berkeley</strain>
    </source>
</reference>
<reference key="5">
    <citation type="submission" date="2009-08" db="EMBL/GenBank/DDBJ databases">
        <authorList>
            <person name="Carlson J.W."/>
            <person name="Booth B."/>
            <person name="Frise E."/>
            <person name="Park S."/>
            <person name="Wan K.H."/>
            <person name="Yu C."/>
            <person name="Celniker S.E."/>
        </authorList>
    </citation>
    <scope>NUCLEOTIDE SEQUENCE [LARGE SCALE MRNA]</scope>
    <source>
        <strain>Berkeley</strain>
        <tissue>Embryo</tissue>
    </source>
</reference>
<sequence>MPDAEQLPDGWEKRTSRSTGMSYYLNMYTKESQWDQPTEPAKKAGGGSAGGGDAPDEVHCLHLLVKHKGSRRPSSWREANITRTKEEAQLLLEVYRNKIVQQEATFDELARSYSDCSSAKRGGDLGKFGRGQMQAAFEDAAFKLNVNQLSGIVDSDSGLHIILRKA</sequence>
<proteinExistence type="evidence at transcript level"/>
<accession>P54353</accession>
<accession>C6TP71</accession>
<accession>O61344</accession>
<accession>Q9VRH1</accession>
<feature type="chain" id="PRO_0000193432" description="Putative peptidyl-prolyl cis-trans isomerase dodo">
    <location>
        <begin position="1"/>
        <end position="166"/>
    </location>
</feature>
<feature type="domain" description="WW" evidence="1">
    <location>
        <begin position="5"/>
        <end position="39"/>
    </location>
</feature>
<feature type="domain" description="PpiC" evidence="2">
    <location>
        <begin position="55"/>
        <end position="166"/>
    </location>
</feature>
<feature type="region of interest" description="Disordered" evidence="3">
    <location>
        <begin position="32"/>
        <end position="53"/>
    </location>
</feature>
<feature type="compositionally biased region" description="Gly residues" evidence="3">
    <location>
        <begin position="44"/>
        <end position="53"/>
    </location>
</feature>
<feature type="sequence conflict" description="In Ref. 2; AAC28408." evidence="4" ref="2">
    <original>A</original>
    <variation>T</variation>
    <location>
        <position position="44"/>
    </location>
</feature>
<evidence type="ECO:0000255" key="1">
    <source>
        <dbReference type="PROSITE-ProRule" id="PRU00224"/>
    </source>
</evidence>
<evidence type="ECO:0000255" key="2">
    <source>
        <dbReference type="PROSITE-ProRule" id="PRU00278"/>
    </source>
</evidence>
<evidence type="ECO:0000256" key="3">
    <source>
        <dbReference type="SAM" id="MobiDB-lite"/>
    </source>
</evidence>
<evidence type="ECO:0000305" key="4"/>
<name>DOD_DROME</name>